<comment type="function">
    <text evidence="1">Catalyzes the conversion of 1-hydroxy-2-methyl-2-(E)-butenyl 4-diphosphate (HMBPP) into a mixture of isopentenyl diphosphate (IPP) and dimethylallyl diphosphate (DMAPP). Acts in the terminal step of the DOXP/MEP pathway for isoprenoid precursor biosynthesis.</text>
</comment>
<comment type="catalytic activity">
    <reaction evidence="1">
        <text>isopentenyl diphosphate + 2 oxidized [2Fe-2S]-[ferredoxin] + H2O = (2E)-4-hydroxy-3-methylbut-2-enyl diphosphate + 2 reduced [2Fe-2S]-[ferredoxin] + 2 H(+)</text>
        <dbReference type="Rhea" id="RHEA:24488"/>
        <dbReference type="Rhea" id="RHEA-COMP:10000"/>
        <dbReference type="Rhea" id="RHEA-COMP:10001"/>
        <dbReference type="ChEBI" id="CHEBI:15377"/>
        <dbReference type="ChEBI" id="CHEBI:15378"/>
        <dbReference type="ChEBI" id="CHEBI:33737"/>
        <dbReference type="ChEBI" id="CHEBI:33738"/>
        <dbReference type="ChEBI" id="CHEBI:128753"/>
        <dbReference type="ChEBI" id="CHEBI:128769"/>
        <dbReference type="EC" id="1.17.7.4"/>
    </reaction>
</comment>
<comment type="catalytic activity">
    <reaction evidence="1">
        <text>dimethylallyl diphosphate + 2 oxidized [2Fe-2S]-[ferredoxin] + H2O = (2E)-4-hydroxy-3-methylbut-2-enyl diphosphate + 2 reduced [2Fe-2S]-[ferredoxin] + 2 H(+)</text>
        <dbReference type="Rhea" id="RHEA:24825"/>
        <dbReference type="Rhea" id="RHEA-COMP:10000"/>
        <dbReference type="Rhea" id="RHEA-COMP:10001"/>
        <dbReference type="ChEBI" id="CHEBI:15377"/>
        <dbReference type="ChEBI" id="CHEBI:15378"/>
        <dbReference type="ChEBI" id="CHEBI:33737"/>
        <dbReference type="ChEBI" id="CHEBI:33738"/>
        <dbReference type="ChEBI" id="CHEBI:57623"/>
        <dbReference type="ChEBI" id="CHEBI:128753"/>
        <dbReference type="EC" id="1.17.7.4"/>
    </reaction>
</comment>
<comment type="cofactor">
    <cofactor evidence="1">
        <name>[4Fe-4S] cluster</name>
        <dbReference type="ChEBI" id="CHEBI:49883"/>
    </cofactor>
    <text evidence="1">Binds 1 [4Fe-4S] cluster per subunit.</text>
</comment>
<comment type="pathway">
    <text evidence="1">Isoprenoid biosynthesis; dimethylallyl diphosphate biosynthesis; dimethylallyl diphosphate from (2E)-4-hydroxy-3-methylbutenyl diphosphate: step 1/1.</text>
</comment>
<comment type="pathway">
    <text evidence="1">Isoprenoid biosynthesis; isopentenyl diphosphate biosynthesis via DXP pathway; isopentenyl diphosphate from 1-deoxy-D-xylulose 5-phosphate: step 6/6.</text>
</comment>
<comment type="similarity">
    <text evidence="1">Belongs to the IspH family.</text>
</comment>
<sequence>MKLLLSKPRGFCAGVERAIETVEKALLLWGSPIYVKHEIVHNRHVVQGLKTKGAIFIEDVEDVPVGARLIYSAHGVSPAVREQAKKRQLIEIDATCGLVTRVHSAVKRYALQGYQIILIGHHNHVEIIGTAGEAPDVTTIVESVEDVKNLNFSSQDKLFYITQTTLSLDDVKEITQALIVKYPHVETLPSSSICYATTNRQMALREITDLTDLVLVVGDPQSSNSNRLREAASTRGIESYLINDEKEIHPEWLLGKQVIGLTAGASTPEEIVQKCIQCLIELGVNEVEDIVYTHEDVVFQLPKPIVNARFSVD</sequence>
<dbReference type="EC" id="1.17.7.4" evidence="1"/>
<dbReference type="EMBL" id="BX908798">
    <property type="protein sequence ID" value="CAF23802.1"/>
    <property type="molecule type" value="Genomic_DNA"/>
</dbReference>
<dbReference type="RefSeq" id="WP_011175628.1">
    <property type="nucleotide sequence ID" value="NC_005861.2"/>
</dbReference>
<dbReference type="SMR" id="Q6MC97"/>
<dbReference type="STRING" id="264201.pc1078"/>
<dbReference type="KEGG" id="pcu:PC_RS05195"/>
<dbReference type="eggNOG" id="COG0761">
    <property type="taxonomic scope" value="Bacteria"/>
</dbReference>
<dbReference type="HOGENOM" id="CLU_027486_1_0_0"/>
<dbReference type="OrthoDB" id="9777362at2"/>
<dbReference type="UniPathway" id="UPA00056">
    <property type="reaction ID" value="UER00097"/>
</dbReference>
<dbReference type="UniPathway" id="UPA00059">
    <property type="reaction ID" value="UER00105"/>
</dbReference>
<dbReference type="Proteomes" id="UP000000529">
    <property type="component" value="Chromosome"/>
</dbReference>
<dbReference type="GO" id="GO:0051539">
    <property type="term" value="F:4 iron, 4 sulfur cluster binding"/>
    <property type="evidence" value="ECO:0007669"/>
    <property type="project" value="UniProtKB-UniRule"/>
</dbReference>
<dbReference type="GO" id="GO:0051745">
    <property type="term" value="F:4-hydroxy-3-methylbut-2-enyl diphosphate reductase activity"/>
    <property type="evidence" value="ECO:0007669"/>
    <property type="project" value="UniProtKB-UniRule"/>
</dbReference>
<dbReference type="GO" id="GO:0046872">
    <property type="term" value="F:metal ion binding"/>
    <property type="evidence" value="ECO:0007669"/>
    <property type="project" value="UniProtKB-KW"/>
</dbReference>
<dbReference type="GO" id="GO:0050992">
    <property type="term" value="P:dimethylallyl diphosphate biosynthetic process"/>
    <property type="evidence" value="ECO:0007669"/>
    <property type="project" value="UniProtKB-UniRule"/>
</dbReference>
<dbReference type="GO" id="GO:0019288">
    <property type="term" value="P:isopentenyl diphosphate biosynthetic process, methylerythritol 4-phosphate pathway"/>
    <property type="evidence" value="ECO:0007669"/>
    <property type="project" value="UniProtKB-UniRule"/>
</dbReference>
<dbReference type="GO" id="GO:0016114">
    <property type="term" value="P:terpenoid biosynthetic process"/>
    <property type="evidence" value="ECO:0007669"/>
    <property type="project" value="UniProtKB-UniRule"/>
</dbReference>
<dbReference type="CDD" id="cd13944">
    <property type="entry name" value="lytB_ispH"/>
    <property type="match status" value="1"/>
</dbReference>
<dbReference type="Gene3D" id="3.40.50.11270">
    <property type="match status" value="1"/>
</dbReference>
<dbReference type="Gene3D" id="3.40.1010.20">
    <property type="entry name" value="4-hydroxy-3-methylbut-2-enyl diphosphate reductase, catalytic domain"/>
    <property type="match status" value="2"/>
</dbReference>
<dbReference type="HAMAP" id="MF_00191">
    <property type="entry name" value="IspH"/>
    <property type="match status" value="1"/>
</dbReference>
<dbReference type="InterPro" id="IPR003451">
    <property type="entry name" value="LytB/IspH"/>
</dbReference>
<dbReference type="NCBIfam" id="TIGR00216">
    <property type="entry name" value="ispH_lytB"/>
    <property type="match status" value="1"/>
</dbReference>
<dbReference type="NCBIfam" id="NF002190">
    <property type="entry name" value="PRK01045.1-4"/>
    <property type="match status" value="1"/>
</dbReference>
<dbReference type="PANTHER" id="PTHR30426">
    <property type="entry name" value="4-HYDROXY-3-METHYLBUT-2-ENYL DIPHOSPHATE REDUCTASE"/>
    <property type="match status" value="1"/>
</dbReference>
<dbReference type="PANTHER" id="PTHR30426:SF0">
    <property type="entry name" value="4-HYDROXY-3-METHYLBUT-2-ENYL DIPHOSPHATE REDUCTASE"/>
    <property type="match status" value="1"/>
</dbReference>
<dbReference type="Pfam" id="PF02401">
    <property type="entry name" value="LYTB"/>
    <property type="match status" value="1"/>
</dbReference>
<organism>
    <name type="scientific">Protochlamydia amoebophila (strain UWE25)</name>
    <dbReference type="NCBI Taxonomy" id="264201"/>
    <lineage>
        <taxon>Bacteria</taxon>
        <taxon>Pseudomonadati</taxon>
        <taxon>Chlamydiota</taxon>
        <taxon>Chlamydiia</taxon>
        <taxon>Parachlamydiales</taxon>
        <taxon>Parachlamydiaceae</taxon>
        <taxon>Candidatus Protochlamydia</taxon>
    </lineage>
</organism>
<evidence type="ECO:0000255" key="1">
    <source>
        <dbReference type="HAMAP-Rule" id="MF_00191"/>
    </source>
</evidence>
<protein>
    <recommendedName>
        <fullName evidence="1">4-hydroxy-3-methylbut-2-enyl diphosphate reductase</fullName>
        <shortName evidence="1">HMBPP reductase</shortName>
        <ecNumber evidence="1">1.17.7.4</ecNumber>
    </recommendedName>
</protein>
<reference key="1">
    <citation type="journal article" date="2004" name="Science">
        <title>Illuminating the evolutionary history of chlamydiae.</title>
        <authorList>
            <person name="Horn M."/>
            <person name="Collingro A."/>
            <person name="Schmitz-Esser S."/>
            <person name="Beier C.L."/>
            <person name="Purkhold U."/>
            <person name="Fartmann B."/>
            <person name="Brandt P."/>
            <person name="Nyakatura G.J."/>
            <person name="Droege M."/>
            <person name="Frishman D."/>
            <person name="Rattei T."/>
            <person name="Mewes H.-W."/>
            <person name="Wagner M."/>
        </authorList>
    </citation>
    <scope>NUCLEOTIDE SEQUENCE [LARGE SCALE GENOMIC DNA]</scope>
    <source>
        <strain>UWE25</strain>
    </source>
</reference>
<accession>Q6MC97</accession>
<feature type="chain" id="PRO_0000128848" description="4-hydroxy-3-methylbut-2-enyl diphosphate reductase">
    <location>
        <begin position="1"/>
        <end position="313"/>
    </location>
</feature>
<feature type="active site" description="Proton donor" evidence="1">
    <location>
        <position position="126"/>
    </location>
</feature>
<feature type="binding site" evidence="1">
    <location>
        <position position="12"/>
    </location>
    <ligand>
        <name>[4Fe-4S] cluster</name>
        <dbReference type="ChEBI" id="CHEBI:49883"/>
    </ligand>
</feature>
<feature type="binding site" evidence="1">
    <location>
        <position position="41"/>
    </location>
    <ligand>
        <name>(2E)-4-hydroxy-3-methylbut-2-enyl diphosphate</name>
        <dbReference type="ChEBI" id="CHEBI:128753"/>
    </ligand>
</feature>
<feature type="binding site" evidence="1">
    <location>
        <position position="41"/>
    </location>
    <ligand>
        <name>dimethylallyl diphosphate</name>
        <dbReference type="ChEBI" id="CHEBI:57623"/>
    </ligand>
</feature>
<feature type="binding site" evidence="1">
    <location>
        <position position="41"/>
    </location>
    <ligand>
        <name>isopentenyl diphosphate</name>
        <dbReference type="ChEBI" id="CHEBI:128769"/>
    </ligand>
</feature>
<feature type="binding site" evidence="1">
    <location>
        <position position="74"/>
    </location>
    <ligand>
        <name>(2E)-4-hydroxy-3-methylbut-2-enyl diphosphate</name>
        <dbReference type="ChEBI" id="CHEBI:128753"/>
    </ligand>
</feature>
<feature type="binding site" evidence="1">
    <location>
        <position position="74"/>
    </location>
    <ligand>
        <name>dimethylallyl diphosphate</name>
        <dbReference type="ChEBI" id="CHEBI:57623"/>
    </ligand>
</feature>
<feature type="binding site" evidence="1">
    <location>
        <position position="74"/>
    </location>
    <ligand>
        <name>isopentenyl diphosphate</name>
        <dbReference type="ChEBI" id="CHEBI:128769"/>
    </ligand>
</feature>
<feature type="binding site" evidence="1">
    <location>
        <position position="96"/>
    </location>
    <ligand>
        <name>[4Fe-4S] cluster</name>
        <dbReference type="ChEBI" id="CHEBI:49883"/>
    </ligand>
</feature>
<feature type="binding site" evidence="1">
    <location>
        <position position="124"/>
    </location>
    <ligand>
        <name>(2E)-4-hydroxy-3-methylbut-2-enyl diphosphate</name>
        <dbReference type="ChEBI" id="CHEBI:128753"/>
    </ligand>
</feature>
<feature type="binding site" evidence="1">
    <location>
        <position position="124"/>
    </location>
    <ligand>
        <name>dimethylallyl diphosphate</name>
        <dbReference type="ChEBI" id="CHEBI:57623"/>
    </ligand>
</feature>
<feature type="binding site" evidence="1">
    <location>
        <position position="124"/>
    </location>
    <ligand>
        <name>isopentenyl diphosphate</name>
        <dbReference type="ChEBI" id="CHEBI:128769"/>
    </ligand>
</feature>
<feature type="binding site" evidence="1">
    <location>
        <position position="164"/>
    </location>
    <ligand>
        <name>(2E)-4-hydroxy-3-methylbut-2-enyl diphosphate</name>
        <dbReference type="ChEBI" id="CHEBI:128753"/>
    </ligand>
</feature>
<feature type="binding site" evidence="1">
    <location>
        <position position="194"/>
    </location>
    <ligand>
        <name>[4Fe-4S] cluster</name>
        <dbReference type="ChEBI" id="CHEBI:49883"/>
    </ligand>
</feature>
<feature type="binding site" evidence="1">
    <location>
        <position position="222"/>
    </location>
    <ligand>
        <name>(2E)-4-hydroxy-3-methylbut-2-enyl diphosphate</name>
        <dbReference type="ChEBI" id="CHEBI:128753"/>
    </ligand>
</feature>
<feature type="binding site" evidence="1">
    <location>
        <position position="222"/>
    </location>
    <ligand>
        <name>dimethylallyl diphosphate</name>
        <dbReference type="ChEBI" id="CHEBI:57623"/>
    </ligand>
</feature>
<feature type="binding site" evidence="1">
    <location>
        <position position="222"/>
    </location>
    <ligand>
        <name>isopentenyl diphosphate</name>
        <dbReference type="ChEBI" id="CHEBI:128769"/>
    </ligand>
</feature>
<feature type="binding site" evidence="1">
    <location>
        <position position="223"/>
    </location>
    <ligand>
        <name>(2E)-4-hydroxy-3-methylbut-2-enyl diphosphate</name>
        <dbReference type="ChEBI" id="CHEBI:128753"/>
    </ligand>
</feature>
<feature type="binding site" evidence="1">
    <location>
        <position position="223"/>
    </location>
    <ligand>
        <name>dimethylallyl diphosphate</name>
        <dbReference type="ChEBI" id="CHEBI:57623"/>
    </ligand>
</feature>
<feature type="binding site" evidence="1">
    <location>
        <position position="223"/>
    </location>
    <ligand>
        <name>isopentenyl diphosphate</name>
        <dbReference type="ChEBI" id="CHEBI:128769"/>
    </ligand>
</feature>
<feature type="binding site" evidence="1">
    <location>
        <position position="224"/>
    </location>
    <ligand>
        <name>(2E)-4-hydroxy-3-methylbut-2-enyl diphosphate</name>
        <dbReference type="ChEBI" id="CHEBI:128753"/>
    </ligand>
</feature>
<feature type="binding site" evidence="1">
    <location>
        <position position="224"/>
    </location>
    <ligand>
        <name>dimethylallyl diphosphate</name>
        <dbReference type="ChEBI" id="CHEBI:57623"/>
    </ligand>
</feature>
<feature type="binding site" evidence="1">
    <location>
        <position position="224"/>
    </location>
    <ligand>
        <name>isopentenyl diphosphate</name>
        <dbReference type="ChEBI" id="CHEBI:128769"/>
    </ligand>
</feature>
<feature type="binding site" evidence="1">
    <location>
        <position position="266"/>
    </location>
    <ligand>
        <name>(2E)-4-hydroxy-3-methylbut-2-enyl diphosphate</name>
        <dbReference type="ChEBI" id="CHEBI:128753"/>
    </ligand>
</feature>
<feature type="binding site" evidence="1">
    <location>
        <position position="266"/>
    </location>
    <ligand>
        <name>dimethylallyl diphosphate</name>
        <dbReference type="ChEBI" id="CHEBI:57623"/>
    </ligand>
</feature>
<feature type="binding site" evidence="1">
    <location>
        <position position="266"/>
    </location>
    <ligand>
        <name>isopentenyl diphosphate</name>
        <dbReference type="ChEBI" id="CHEBI:128769"/>
    </ligand>
</feature>
<proteinExistence type="inferred from homology"/>
<name>ISPH_PARUW</name>
<keyword id="KW-0004">4Fe-4S</keyword>
<keyword id="KW-0408">Iron</keyword>
<keyword id="KW-0411">Iron-sulfur</keyword>
<keyword id="KW-0414">Isoprene biosynthesis</keyword>
<keyword id="KW-0479">Metal-binding</keyword>
<keyword id="KW-0560">Oxidoreductase</keyword>
<keyword id="KW-1185">Reference proteome</keyword>
<gene>
    <name evidence="1" type="primary">ispH</name>
    <name type="synonym">lytB</name>
    <name type="ordered locus">pc1078</name>
</gene>